<sequence>MFSNSKKKIFLYVLIAGVATFSFAFLVLNRLQAEEHSLAYVENLFLDPFIKQNESLAHANDRPFKLYLGIFSQAKNVDRRNFLRTDYNEYIKEFAVNDTVDVRFILGLPENEQELATIREEQRTYGDLAVLPIPENVDAGKSIVYFQTFLEGYQPFPLFSELADNLIMPSTQFHGSFIYNQSIKTYELPGMKEFQDLGEPKHDYDFIVKADDDSFLNLPRLFEMLKEHVGKSRFYFGRDCTRRELPTAVRDFPYMCGFFYIVSPDMAYEVAKRRNIIIPFEDAQTGYSIYLSGNVKNAEFSKCTLYDLILPNEGFNYRQSYLRIDAIAVHKLKSIPLLSTVSNWFKKMYEHRANCSALIETERLSCLQATIPLPSLDV</sequence>
<accession>Q9USX0</accession>
<organism>
    <name type="scientific">Schizosaccharomyces pombe (strain 972 / ATCC 24843)</name>
    <name type="common">Fission yeast</name>
    <dbReference type="NCBI Taxonomy" id="284812"/>
    <lineage>
        <taxon>Eukaryota</taxon>
        <taxon>Fungi</taxon>
        <taxon>Dikarya</taxon>
        <taxon>Ascomycota</taxon>
        <taxon>Taphrinomycotina</taxon>
        <taxon>Schizosaccharomycetes</taxon>
        <taxon>Schizosaccharomycetales</taxon>
        <taxon>Schizosaccharomycetaceae</taxon>
        <taxon>Schizosaccharomyces</taxon>
    </lineage>
</organism>
<name>PVG3_SCHPO</name>
<reference key="1">
    <citation type="journal article" date="2002" name="Nature">
        <title>The genome sequence of Schizosaccharomyces pombe.</title>
        <authorList>
            <person name="Wood V."/>
            <person name="Gwilliam R."/>
            <person name="Rajandream M.A."/>
            <person name="Lyne M.H."/>
            <person name="Lyne R."/>
            <person name="Stewart A."/>
            <person name="Sgouros J.G."/>
            <person name="Peat N."/>
            <person name="Hayles J."/>
            <person name="Baker S.G."/>
            <person name="Basham D."/>
            <person name="Bowman S."/>
            <person name="Brooks K."/>
            <person name="Brown D."/>
            <person name="Brown S."/>
            <person name="Chillingworth T."/>
            <person name="Churcher C.M."/>
            <person name="Collins M."/>
            <person name="Connor R."/>
            <person name="Cronin A."/>
            <person name="Davis P."/>
            <person name="Feltwell T."/>
            <person name="Fraser A."/>
            <person name="Gentles S."/>
            <person name="Goble A."/>
            <person name="Hamlin N."/>
            <person name="Harris D.E."/>
            <person name="Hidalgo J."/>
            <person name="Hodgson G."/>
            <person name="Holroyd S."/>
            <person name="Hornsby T."/>
            <person name="Howarth S."/>
            <person name="Huckle E.J."/>
            <person name="Hunt S."/>
            <person name="Jagels K."/>
            <person name="James K.D."/>
            <person name="Jones L."/>
            <person name="Jones M."/>
            <person name="Leather S."/>
            <person name="McDonald S."/>
            <person name="McLean J."/>
            <person name="Mooney P."/>
            <person name="Moule S."/>
            <person name="Mungall K.L."/>
            <person name="Murphy L.D."/>
            <person name="Niblett D."/>
            <person name="Odell C."/>
            <person name="Oliver K."/>
            <person name="O'Neil S."/>
            <person name="Pearson D."/>
            <person name="Quail M.A."/>
            <person name="Rabbinowitsch E."/>
            <person name="Rutherford K.M."/>
            <person name="Rutter S."/>
            <person name="Saunders D."/>
            <person name="Seeger K."/>
            <person name="Sharp S."/>
            <person name="Skelton J."/>
            <person name="Simmonds M.N."/>
            <person name="Squares R."/>
            <person name="Squares S."/>
            <person name="Stevens K."/>
            <person name="Taylor K."/>
            <person name="Taylor R.G."/>
            <person name="Tivey A."/>
            <person name="Walsh S.V."/>
            <person name="Warren T."/>
            <person name="Whitehead S."/>
            <person name="Woodward J.R."/>
            <person name="Volckaert G."/>
            <person name="Aert R."/>
            <person name="Robben J."/>
            <person name="Grymonprez B."/>
            <person name="Weltjens I."/>
            <person name="Vanstreels E."/>
            <person name="Rieger M."/>
            <person name="Schaefer M."/>
            <person name="Mueller-Auer S."/>
            <person name="Gabel C."/>
            <person name="Fuchs M."/>
            <person name="Duesterhoeft A."/>
            <person name="Fritzc C."/>
            <person name="Holzer E."/>
            <person name="Moestl D."/>
            <person name="Hilbert H."/>
            <person name="Borzym K."/>
            <person name="Langer I."/>
            <person name="Beck A."/>
            <person name="Lehrach H."/>
            <person name="Reinhardt R."/>
            <person name="Pohl T.M."/>
            <person name="Eger P."/>
            <person name="Zimmermann W."/>
            <person name="Wedler H."/>
            <person name="Wambutt R."/>
            <person name="Purnelle B."/>
            <person name="Goffeau A."/>
            <person name="Cadieu E."/>
            <person name="Dreano S."/>
            <person name="Gloux S."/>
            <person name="Lelaure V."/>
            <person name="Mottier S."/>
            <person name="Galibert F."/>
            <person name="Aves S.J."/>
            <person name="Xiang Z."/>
            <person name="Hunt C."/>
            <person name="Moore K."/>
            <person name="Hurst S.M."/>
            <person name="Lucas M."/>
            <person name="Rochet M."/>
            <person name="Gaillardin C."/>
            <person name="Tallada V.A."/>
            <person name="Garzon A."/>
            <person name="Thode G."/>
            <person name="Daga R.R."/>
            <person name="Cruzado L."/>
            <person name="Jimenez J."/>
            <person name="Sanchez M."/>
            <person name="del Rey F."/>
            <person name="Benito J."/>
            <person name="Dominguez A."/>
            <person name="Revuelta J.L."/>
            <person name="Moreno S."/>
            <person name="Armstrong J."/>
            <person name="Forsburg S.L."/>
            <person name="Cerutti L."/>
            <person name="Lowe T."/>
            <person name="McCombie W.R."/>
            <person name="Paulsen I."/>
            <person name="Potashkin J."/>
            <person name="Shpakovski G.V."/>
            <person name="Ussery D."/>
            <person name="Barrell B.G."/>
            <person name="Nurse P."/>
        </authorList>
    </citation>
    <scope>NUCLEOTIDE SEQUENCE [LARGE SCALE GENOMIC DNA]</scope>
    <source>
        <strain>972 / ATCC 24843</strain>
    </source>
</reference>
<reference key="2">
    <citation type="journal article" date="2004" name="J. Biol. Chem.">
        <title>Five genes involved in biosynthesis of the pyruvylated Galbeta1,3-epitope in Schizosaccharomyces pombe N-linked glycans.</title>
        <authorList>
            <person name="Andreishcheva E.N."/>
            <person name="Kunkel J.P."/>
            <person name="Gemmill T.R."/>
            <person name="Trimble R.B."/>
        </authorList>
    </citation>
    <scope>FUNCTION</scope>
</reference>
<reference key="3">
    <citation type="journal article" date="2005" name="Curr. Biol.">
        <title>A large-scale screen in S. pombe identifies seven novel genes required for critical meiotic events.</title>
        <authorList>
            <person name="Martin-Castellanos C."/>
            <person name="Blanco M."/>
            <person name="Rozalen A.E."/>
            <person name="Perez-Hidalgo L."/>
            <person name="Garcia A.I."/>
            <person name="Conde F."/>
            <person name="Mata J."/>
            <person name="Ellermeier C."/>
            <person name="Davis L."/>
            <person name="San-Segundo P."/>
            <person name="Smith G.R."/>
            <person name="Moreno S."/>
        </authorList>
    </citation>
    <scope>FUNCTION IN MEIOSIS</scope>
</reference>
<reference key="4">
    <citation type="journal article" date="2006" name="Nat. Biotechnol.">
        <title>ORFeome cloning and global analysis of protein localization in the fission yeast Schizosaccharomyces pombe.</title>
        <authorList>
            <person name="Matsuyama A."/>
            <person name="Arai R."/>
            <person name="Yashiroda Y."/>
            <person name="Shirai A."/>
            <person name="Kamata A."/>
            <person name="Sekido S."/>
            <person name="Kobayashi Y."/>
            <person name="Hashimoto A."/>
            <person name="Hamamoto M."/>
            <person name="Hiraoka Y."/>
            <person name="Horinouchi S."/>
            <person name="Yoshida M."/>
        </authorList>
    </citation>
    <scope>SUBCELLULAR LOCATION [LARGE SCALE ANALYSIS]</scope>
</reference>
<proteinExistence type="evidence at protein level"/>
<dbReference type="EC" id="2.4.1.134"/>
<dbReference type="EMBL" id="CU329671">
    <property type="protein sequence ID" value="CAB58972.1"/>
    <property type="molecule type" value="Genomic_DNA"/>
</dbReference>
<dbReference type="PIR" id="T39790">
    <property type="entry name" value="T39790"/>
</dbReference>
<dbReference type="RefSeq" id="NP_595999.1">
    <property type="nucleotide sequence ID" value="NM_001021907.2"/>
</dbReference>
<dbReference type="BioGRID" id="277345">
    <property type="interactions" value="4"/>
</dbReference>
<dbReference type="FunCoup" id="Q9USX0">
    <property type="interactions" value="5"/>
</dbReference>
<dbReference type="STRING" id="284812.Q9USX0"/>
<dbReference type="CAZy" id="GT31">
    <property type="family name" value="Glycosyltransferase Family 31"/>
</dbReference>
<dbReference type="GlyCosmos" id="Q9USX0">
    <property type="glycosylation" value="4 sites, No reported glycans"/>
</dbReference>
<dbReference type="iPTMnet" id="Q9USX0"/>
<dbReference type="PaxDb" id="4896-SPBC1921.06c.1"/>
<dbReference type="EnsemblFungi" id="SPBC1921.06c.1">
    <property type="protein sequence ID" value="SPBC1921.06c.1:pep"/>
    <property type="gene ID" value="SPBC1921.06c"/>
</dbReference>
<dbReference type="GeneID" id="2540827"/>
<dbReference type="KEGG" id="spo:2540827"/>
<dbReference type="PomBase" id="SPBC1921.06c">
    <property type="gene designation" value="pvg3"/>
</dbReference>
<dbReference type="VEuPathDB" id="FungiDB:SPBC1921.06c"/>
<dbReference type="eggNOG" id="KOG2287">
    <property type="taxonomic scope" value="Eukaryota"/>
</dbReference>
<dbReference type="HOGENOM" id="CLU_731891_0_0_1"/>
<dbReference type="InParanoid" id="Q9USX0"/>
<dbReference type="OMA" id="DSCFRHG"/>
<dbReference type="PhylomeDB" id="Q9USX0"/>
<dbReference type="BioCyc" id="MetaCyc:MONOMER-20447"/>
<dbReference type="PRO" id="PR:Q9USX0"/>
<dbReference type="Proteomes" id="UP000002485">
    <property type="component" value="Chromosome II"/>
</dbReference>
<dbReference type="GO" id="GO:0005789">
    <property type="term" value="C:endoplasmic reticulum membrane"/>
    <property type="evidence" value="ECO:0007669"/>
    <property type="project" value="UniProtKB-SubCell"/>
</dbReference>
<dbReference type="GO" id="GO:0005794">
    <property type="term" value="C:Golgi apparatus"/>
    <property type="evidence" value="ECO:0000314"/>
    <property type="project" value="PomBase"/>
</dbReference>
<dbReference type="GO" id="GO:0032580">
    <property type="term" value="C:Golgi cisterna membrane"/>
    <property type="evidence" value="ECO:0007669"/>
    <property type="project" value="UniProtKB-SubCell"/>
</dbReference>
<dbReference type="GO" id="GO:0047220">
    <property type="term" value="F:galactosylxylosylprotein 3-beta-galactosyltransferase activity"/>
    <property type="evidence" value="ECO:0000304"/>
    <property type="project" value="PomBase"/>
</dbReference>
<dbReference type="GO" id="GO:0051072">
    <property type="term" value="P:4,6-pyruvylated galactose residue biosynthetic process"/>
    <property type="evidence" value="ECO:0000315"/>
    <property type="project" value="PomBase"/>
</dbReference>
<dbReference type="GO" id="GO:0071555">
    <property type="term" value="P:cell wall organization"/>
    <property type="evidence" value="ECO:0007669"/>
    <property type="project" value="UniProtKB-KW"/>
</dbReference>
<dbReference type="GO" id="GO:0051321">
    <property type="term" value="P:meiotic cell cycle"/>
    <property type="evidence" value="ECO:0007669"/>
    <property type="project" value="UniProtKB-KW"/>
</dbReference>
<dbReference type="GO" id="GO:0006486">
    <property type="term" value="P:protein glycosylation"/>
    <property type="evidence" value="ECO:0007669"/>
    <property type="project" value="InterPro"/>
</dbReference>
<dbReference type="Gene3D" id="3.90.550.50">
    <property type="match status" value="1"/>
</dbReference>
<dbReference type="InterPro" id="IPR002659">
    <property type="entry name" value="Glyco_trans_31"/>
</dbReference>
<dbReference type="PANTHER" id="PTHR11214:SF351">
    <property type="entry name" value="BETA-1,3-GALACTOSYLTRANSFERASE PVG3"/>
    <property type="match status" value="1"/>
</dbReference>
<dbReference type="PANTHER" id="PTHR11214">
    <property type="entry name" value="BETA-1,3-N-ACETYLGLUCOSAMINYLTRANSFERASE"/>
    <property type="match status" value="1"/>
</dbReference>
<evidence type="ECO:0000255" key="1"/>
<evidence type="ECO:0000269" key="2">
    <source>
    </source>
</evidence>
<evidence type="ECO:0000269" key="3">
    <source>
    </source>
</evidence>
<evidence type="ECO:0000269" key="4">
    <source>
    </source>
</evidence>
<evidence type="ECO:0000305" key="5"/>
<gene>
    <name type="primary">pvg3</name>
    <name type="synonym">mug49</name>
    <name type="ORF">SPBC1921.06c</name>
</gene>
<feature type="chain" id="PRO_0000076296" description="Beta-1,3-galactosyltransferase pvg3">
    <location>
        <begin position="1"/>
        <end position="378"/>
    </location>
</feature>
<feature type="topological domain" description="Cytoplasmic" evidence="1">
    <location>
        <begin position="1"/>
        <end position="8"/>
    </location>
</feature>
<feature type="transmembrane region" description="Helical; Signal-anchor for type II membrane protein" evidence="1">
    <location>
        <begin position="9"/>
        <end position="29"/>
    </location>
</feature>
<feature type="topological domain" description="Lumenal" evidence="1">
    <location>
        <begin position="30"/>
        <end position="378"/>
    </location>
</feature>
<feature type="glycosylation site" description="N-linked (GlcNAc...) asparagine" evidence="1">
    <location>
        <position position="53"/>
    </location>
</feature>
<feature type="glycosylation site" description="N-linked (GlcNAc...) asparagine" evidence="1">
    <location>
        <position position="97"/>
    </location>
</feature>
<feature type="glycosylation site" description="N-linked (GlcNAc...) asparagine" evidence="1">
    <location>
        <position position="180"/>
    </location>
</feature>
<feature type="glycosylation site" description="N-linked (GlcNAc...) asparagine" evidence="1">
    <location>
        <position position="354"/>
    </location>
</feature>
<protein>
    <recommendedName>
        <fullName>Beta-1,3-galactosyltransferase pvg3</fullName>
        <ecNumber>2.4.1.134</ecNumber>
    </recommendedName>
    <alternativeName>
        <fullName>Meiotically up-regulated gene 49 protein</fullName>
    </alternativeName>
    <alternativeName>
        <fullName>Pyruvylated Gal-beta-1,3-epitope synthesis protein 3</fullName>
        <shortName>PvGal synthesis protein 3</shortName>
    </alternativeName>
</protein>
<keyword id="KW-0961">Cell wall biogenesis/degradation</keyword>
<keyword id="KW-0256">Endoplasmic reticulum</keyword>
<keyword id="KW-0325">Glycoprotein</keyword>
<keyword id="KW-0328">Glycosyltransferase</keyword>
<keyword id="KW-0333">Golgi apparatus</keyword>
<keyword id="KW-0469">Meiosis</keyword>
<keyword id="KW-0472">Membrane</keyword>
<keyword id="KW-1185">Reference proteome</keyword>
<keyword id="KW-0735">Signal-anchor</keyword>
<keyword id="KW-0808">Transferase</keyword>
<keyword id="KW-0812">Transmembrane</keyword>
<keyword id="KW-1133">Transmembrane helix</keyword>
<comment type="function">
    <text evidence="2 3">Involved in cell wall biogenesis. Has a role in the addition of Gal-beta1,3 moeities to galactomannans and their subsequent pyruvylation. Has a role in meiosis.</text>
</comment>
<comment type="catalytic activity">
    <reaction>
        <text>3-O-(beta-D-galactosyl-(1-&gt;4)-beta-D-xylosyl)-L-seryl-[protein] + UDP-alpha-D-galactose = 3-O-(beta-D-galactosyl-(1-&gt;3)-beta-D-galactosyl-(1-&gt;4)-beta-D-xylosyl)-L-seryl-[protein] + UDP + H(+)</text>
        <dbReference type="Rhea" id="RHEA:11780"/>
        <dbReference type="Rhea" id="RHEA-COMP:12570"/>
        <dbReference type="Rhea" id="RHEA-COMP:12571"/>
        <dbReference type="ChEBI" id="CHEBI:15378"/>
        <dbReference type="ChEBI" id="CHEBI:58223"/>
        <dbReference type="ChEBI" id="CHEBI:66914"/>
        <dbReference type="ChEBI" id="CHEBI:132088"/>
        <dbReference type="ChEBI" id="CHEBI:132090"/>
        <dbReference type="EC" id="2.4.1.134"/>
    </reaction>
</comment>
<comment type="subcellular location">
    <subcellularLocation>
        <location evidence="4">Endoplasmic reticulum membrane</location>
        <topology evidence="4">Single-pass type II membrane protein</topology>
    </subcellularLocation>
    <subcellularLocation>
        <location evidence="4">Golgi apparatus</location>
        <location evidence="4">Golgi stack membrane</location>
        <topology evidence="4">Single-pass type II membrane protein</topology>
    </subcellularLocation>
</comment>
<comment type="similarity">
    <text evidence="5">Belongs to the glycosyltransferase 31 family.</text>
</comment>